<evidence type="ECO:0000250" key="1"/>
<evidence type="ECO:0000250" key="2">
    <source>
        <dbReference type="UniProtKB" id="Q9VT57"/>
    </source>
</evidence>
<evidence type="ECO:0000255" key="3">
    <source>
        <dbReference type="PROSITE-ProRule" id="PRU00159"/>
    </source>
</evidence>
<evidence type="ECO:0000255" key="4">
    <source>
        <dbReference type="PROSITE-ProRule" id="PRU10027"/>
    </source>
</evidence>
<evidence type="ECO:0000256" key="5">
    <source>
        <dbReference type="SAM" id="MobiDB-lite"/>
    </source>
</evidence>
<evidence type="ECO:0000305" key="6"/>
<dbReference type="EC" id="2.7.11.22"/>
<dbReference type="EC" id="2.7.11.23"/>
<dbReference type="EMBL" id="BX284601">
    <property type="protein sequence ID" value="CAB03083.2"/>
    <property type="molecule type" value="Genomic_DNA"/>
</dbReference>
<dbReference type="PIR" id="T22001">
    <property type="entry name" value="T22001"/>
</dbReference>
<dbReference type="RefSeq" id="NP_492357.2">
    <property type="nucleotide sequence ID" value="NM_059956.6"/>
</dbReference>
<dbReference type="SMR" id="P90866"/>
<dbReference type="BioGRID" id="38110">
    <property type="interactions" value="4"/>
</dbReference>
<dbReference type="FunCoup" id="P90866">
    <property type="interactions" value="3577"/>
</dbReference>
<dbReference type="IntAct" id="P90866">
    <property type="interactions" value="1"/>
</dbReference>
<dbReference type="STRING" id="6239.F39H11.3.1"/>
<dbReference type="PaxDb" id="6239-F39H11.3"/>
<dbReference type="PeptideAtlas" id="P90866"/>
<dbReference type="EnsemblMetazoa" id="F39H11.3.1">
    <property type="protein sequence ID" value="F39H11.3.1"/>
    <property type="gene ID" value="WBGene00000409"/>
</dbReference>
<dbReference type="GeneID" id="172677"/>
<dbReference type="KEGG" id="cel:CELE_F39H11.3"/>
<dbReference type="UCSC" id="F39H11.3">
    <property type="organism name" value="c. elegans"/>
</dbReference>
<dbReference type="AGR" id="WB:WBGene00000409"/>
<dbReference type="CTD" id="172677"/>
<dbReference type="WormBase" id="F39H11.3">
    <property type="protein sequence ID" value="CE32409"/>
    <property type="gene ID" value="WBGene00000409"/>
    <property type="gene designation" value="cdk-8"/>
</dbReference>
<dbReference type="eggNOG" id="KOG0666">
    <property type="taxonomic scope" value="Eukaryota"/>
</dbReference>
<dbReference type="GeneTree" id="ENSGT00940000175924"/>
<dbReference type="HOGENOM" id="CLU_000288_181_6_1"/>
<dbReference type="InParanoid" id="P90866"/>
<dbReference type="OMA" id="DFEGCKI"/>
<dbReference type="OrthoDB" id="6284126at2759"/>
<dbReference type="PhylomeDB" id="P90866"/>
<dbReference type="Reactome" id="R-CEL-2173796">
    <property type="pathway name" value="SMAD2/SMAD3:SMAD4 heterotrimer regulates transcription"/>
</dbReference>
<dbReference type="PRO" id="PR:P90866"/>
<dbReference type="Proteomes" id="UP000001940">
    <property type="component" value="Chromosome I"/>
</dbReference>
<dbReference type="Bgee" id="WBGene00000409">
    <property type="expression patterns" value="Expressed in germ line (C elegans) and 4 other cell types or tissues"/>
</dbReference>
<dbReference type="GO" id="GO:0005634">
    <property type="term" value="C:nucleus"/>
    <property type="evidence" value="ECO:0000250"/>
    <property type="project" value="UniProtKB"/>
</dbReference>
<dbReference type="GO" id="GO:0005524">
    <property type="term" value="F:ATP binding"/>
    <property type="evidence" value="ECO:0007669"/>
    <property type="project" value="UniProtKB-KW"/>
</dbReference>
<dbReference type="GO" id="GO:0004693">
    <property type="term" value="F:cyclin-dependent protein serine/threonine kinase activity"/>
    <property type="evidence" value="ECO:0007669"/>
    <property type="project" value="UniProtKB-EC"/>
</dbReference>
<dbReference type="GO" id="GO:0106310">
    <property type="term" value="F:protein serine kinase activity"/>
    <property type="evidence" value="ECO:0007669"/>
    <property type="project" value="RHEA"/>
</dbReference>
<dbReference type="GO" id="GO:0004674">
    <property type="term" value="F:protein serine/threonine kinase activity"/>
    <property type="evidence" value="ECO:0000318"/>
    <property type="project" value="GO_Central"/>
</dbReference>
<dbReference type="GO" id="GO:0008353">
    <property type="term" value="F:RNA polymerase II CTD heptapeptide repeat kinase activity"/>
    <property type="evidence" value="ECO:0007669"/>
    <property type="project" value="UniProtKB-EC"/>
</dbReference>
<dbReference type="GO" id="GO:0000082">
    <property type="term" value="P:G1/S transition of mitotic cell cycle"/>
    <property type="evidence" value="ECO:0000250"/>
    <property type="project" value="UniProtKB"/>
</dbReference>
<dbReference type="GO" id="GO:0006468">
    <property type="term" value="P:protein phosphorylation"/>
    <property type="evidence" value="ECO:0000250"/>
    <property type="project" value="UniProtKB"/>
</dbReference>
<dbReference type="CDD" id="cd07842">
    <property type="entry name" value="STKc_CDK8_like"/>
    <property type="match status" value="1"/>
</dbReference>
<dbReference type="FunFam" id="3.30.200.20:FF:000707">
    <property type="entry name" value="Cyclin dependent kinase 19"/>
    <property type="match status" value="1"/>
</dbReference>
<dbReference type="FunFam" id="1.10.510.10:FF:000088">
    <property type="entry name" value="cyclin-dependent kinase 8 isoform X1"/>
    <property type="match status" value="1"/>
</dbReference>
<dbReference type="Gene3D" id="3.30.200.20">
    <property type="entry name" value="Phosphorylase Kinase, domain 1"/>
    <property type="match status" value="1"/>
</dbReference>
<dbReference type="Gene3D" id="1.10.510.10">
    <property type="entry name" value="Transferase(Phosphotransferase) domain 1"/>
    <property type="match status" value="1"/>
</dbReference>
<dbReference type="InterPro" id="IPR050108">
    <property type="entry name" value="CDK"/>
</dbReference>
<dbReference type="InterPro" id="IPR011009">
    <property type="entry name" value="Kinase-like_dom_sf"/>
</dbReference>
<dbReference type="InterPro" id="IPR000719">
    <property type="entry name" value="Prot_kinase_dom"/>
</dbReference>
<dbReference type="InterPro" id="IPR017441">
    <property type="entry name" value="Protein_kinase_ATP_BS"/>
</dbReference>
<dbReference type="InterPro" id="IPR008271">
    <property type="entry name" value="Ser/Thr_kinase_AS"/>
</dbReference>
<dbReference type="PANTHER" id="PTHR24056">
    <property type="entry name" value="CELL DIVISION PROTEIN KINASE"/>
    <property type="match status" value="1"/>
</dbReference>
<dbReference type="PANTHER" id="PTHR24056:SF495">
    <property type="entry name" value="CYCLIN-DEPENDENT KINASE 8-RELATED"/>
    <property type="match status" value="1"/>
</dbReference>
<dbReference type="Pfam" id="PF00069">
    <property type="entry name" value="Pkinase"/>
    <property type="match status" value="1"/>
</dbReference>
<dbReference type="SMART" id="SM00220">
    <property type="entry name" value="S_TKc"/>
    <property type="match status" value="1"/>
</dbReference>
<dbReference type="SUPFAM" id="SSF56112">
    <property type="entry name" value="Protein kinase-like (PK-like)"/>
    <property type="match status" value="1"/>
</dbReference>
<dbReference type="PROSITE" id="PS00107">
    <property type="entry name" value="PROTEIN_KINASE_ATP"/>
    <property type="match status" value="1"/>
</dbReference>
<dbReference type="PROSITE" id="PS50011">
    <property type="entry name" value="PROTEIN_KINASE_DOM"/>
    <property type="match status" value="1"/>
</dbReference>
<dbReference type="PROSITE" id="PS00108">
    <property type="entry name" value="PROTEIN_KINASE_ST"/>
    <property type="match status" value="1"/>
</dbReference>
<comment type="function">
    <text evidence="2">Component of the Mediator complex, a coactivator involved in regulated gene transcription of nearly all RNA polymerase II-dependent genes. Mediator functions as a bridge to convey information from gene-specific regulatory proteins to the basal RNA polymerase II transcription machinery. Mediator is recruited to promoters by direct interactions with regulatory proteins and serves as a scaffold for the assembly of a functional pre-initiation complex with RNA polymerase II and the general transcription factors. Phosphorylates the CTD (C-terminal domain) of the large subunit of RNA polymerase II (RNAp II), which may inhibit the formation of a transcription initiation complex (By similarity).</text>
</comment>
<comment type="catalytic activity">
    <reaction>
        <text>L-seryl-[protein] + ATP = O-phospho-L-seryl-[protein] + ADP + H(+)</text>
        <dbReference type="Rhea" id="RHEA:17989"/>
        <dbReference type="Rhea" id="RHEA-COMP:9863"/>
        <dbReference type="Rhea" id="RHEA-COMP:11604"/>
        <dbReference type="ChEBI" id="CHEBI:15378"/>
        <dbReference type="ChEBI" id="CHEBI:29999"/>
        <dbReference type="ChEBI" id="CHEBI:30616"/>
        <dbReference type="ChEBI" id="CHEBI:83421"/>
        <dbReference type="ChEBI" id="CHEBI:456216"/>
        <dbReference type="EC" id="2.7.11.22"/>
    </reaction>
</comment>
<comment type="catalytic activity">
    <reaction>
        <text>L-threonyl-[protein] + ATP = O-phospho-L-threonyl-[protein] + ADP + H(+)</text>
        <dbReference type="Rhea" id="RHEA:46608"/>
        <dbReference type="Rhea" id="RHEA-COMP:11060"/>
        <dbReference type="Rhea" id="RHEA-COMP:11605"/>
        <dbReference type="ChEBI" id="CHEBI:15378"/>
        <dbReference type="ChEBI" id="CHEBI:30013"/>
        <dbReference type="ChEBI" id="CHEBI:30616"/>
        <dbReference type="ChEBI" id="CHEBI:61977"/>
        <dbReference type="ChEBI" id="CHEBI:456216"/>
        <dbReference type="EC" id="2.7.11.22"/>
    </reaction>
</comment>
<comment type="catalytic activity">
    <reaction>
        <text>[DNA-directed RNA polymerase] + ATP = phospho-[DNA-directed RNA polymerase] + ADP + H(+)</text>
        <dbReference type="Rhea" id="RHEA:10216"/>
        <dbReference type="Rhea" id="RHEA-COMP:11321"/>
        <dbReference type="Rhea" id="RHEA-COMP:11322"/>
        <dbReference type="ChEBI" id="CHEBI:15378"/>
        <dbReference type="ChEBI" id="CHEBI:30616"/>
        <dbReference type="ChEBI" id="CHEBI:43176"/>
        <dbReference type="ChEBI" id="CHEBI:68546"/>
        <dbReference type="ChEBI" id="CHEBI:456216"/>
        <dbReference type="EC" id="2.7.11.23"/>
    </reaction>
</comment>
<comment type="cofactor">
    <cofactor evidence="1">
        <name>Mg(2+)</name>
        <dbReference type="ChEBI" id="CHEBI:18420"/>
    </cofactor>
</comment>
<comment type="subunit">
    <text evidence="1">Component of the Mediator complex.</text>
</comment>
<comment type="subcellular location">
    <subcellularLocation>
        <location evidence="6">Nucleus</location>
    </subcellularLocation>
</comment>
<comment type="similarity">
    <text evidence="6">Belongs to the protein kinase superfamily. CMGC Ser/Thr protein kinase family. CDC2/CDKX subfamily.</text>
</comment>
<name>CDK8_CAEEL</name>
<gene>
    <name type="primary">cdk-8</name>
    <name type="ORF">F39H11.3</name>
</gene>
<accession>P90866</accession>
<reference key="1">
    <citation type="journal article" date="1998" name="Science">
        <title>Genome sequence of the nematode C. elegans: a platform for investigating biology.</title>
        <authorList>
            <consortium name="The C. elegans sequencing consortium"/>
        </authorList>
    </citation>
    <scope>NUCLEOTIDE SEQUENCE [LARGE SCALE GENOMIC DNA]</scope>
    <source>
        <strain>Bristol N2</strain>
    </source>
</reference>
<keyword id="KW-0010">Activator</keyword>
<keyword id="KW-0067">ATP-binding</keyword>
<keyword id="KW-0418">Kinase</keyword>
<keyword id="KW-0547">Nucleotide-binding</keyword>
<keyword id="KW-0539">Nucleus</keyword>
<keyword id="KW-1185">Reference proteome</keyword>
<keyword id="KW-0723">Serine/threonine-protein kinase</keyword>
<keyword id="KW-0804">Transcription</keyword>
<keyword id="KW-0805">Transcription regulation</keyword>
<keyword id="KW-0808">Transferase</keyword>
<protein>
    <recommendedName>
        <fullName>Cyclin-dependent kinase 8</fullName>
        <ecNumber>2.7.11.22</ecNumber>
        <ecNumber>2.7.11.23</ecNumber>
    </recommendedName>
    <alternativeName>
        <fullName>Cell division protein kinase 8</fullName>
    </alternativeName>
    <alternativeName>
        <fullName>Mediator complex subunit cdk-8</fullName>
    </alternativeName>
    <alternativeName>
        <fullName>Mediator of RNA polymerase II transcription subunit cdk-8</fullName>
    </alternativeName>
</protein>
<sequence>MTLMIDENFKKQLAQRRERVEDLFYFENSKEIGRGTYGLVYKAVPKKQNGQFPNKEYALKMIEGQGFSMSACREIALFRELRHPNLICLQRVFLTNEKKVWLLLDYAEHDLWHVIKHHRTAKSKKVPIMVPRNMVKNILFQILSGMHYLHSNWVLHRDLKPANILLMGDGPPDMRGRVKIADLGFSRIYANPLKPMAELDPVVVTFWYRAPELLLGAKHYTKAIDVWAIGCIFAELLTAEPLFFCKEEDIKAQNPYHYDQVKRIFHLLGYPSDADWPDMKKMPDHQRLLSDARNEGTPIQTFPNSLHRYFDKWKINSQSSPYRLLVKLLTVDPTKRVSCEEAMNDIYFRKMERPPRETDDVFNKYPIPYAKKEQQMTVAPDQAQQQHQQQQVQMQQQPQMGQQQMMGQPQMVQPQMGQPPMGGAHPGVVAPDGHPHQMMQQQQHPQQHHMQYQGMHDPMQGGMDEGPQAKMMRMGNVPVGRYAPMPPPYGAPQDYHPQQGPPMVQMMQQPGPSGYYPQRPGQPTGAVPGPGPQGYMNPQMGMQMGMRAPGVPPQGYMPGRGMAPPQMGQQQPGPNQQQQQQWQQQYHR</sequence>
<organism>
    <name type="scientific">Caenorhabditis elegans</name>
    <dbReference type="NCBI Taxonomy" id="6239"/>
    <lineage>
        <taxon>Eukaryota</taxon>
        <taxon>Metazoa</taxon>
        <taxon>Ecdysozoa</taxon>
        <taxon>Nematoda</taxon>
        <taxon>Chromadorea</taxon>
        <taxon>Rhabditida</taxon>
        <taxon>Rhabditina</taxon>
        <taxon>Rhabditomorpha</taxon>
        <taxon>Rhabditoidea</taxon>
        <taxon>Rhabditidae</taxon>
        <taxon>Peloderinae</taxon>
        <taxon>Caenorhabditis</taxon>
    </lineage>
</organism>
<feature type="chain" id="PRO_0000312931" description="Cyclin-dependent kinase 8">
    <location>
        <begin position="1"/>
        <end position="588"/>
    </location>
</feature>
<feature type="domain" description="Protein kinase" evidence="3">
    <location>
        <begin position="26"/>
        <end position="348"/>
    </location>
</feature>
<feature type="region of interest" description="Disordered" evidence="5">
    <location>
        <begin position="376"/>
        <end position="426"/>
    </location>
</feature>
<feature type="region of interest" description="Disordered" evidence="5">
    <location>
        <begin position="510"/>
        <end position="529"/>
    </location>
</feature>
<feature type="region of interest" description="Disordered" evidence="5">
    <location>
        <begin position="546"/>
        <end position="588"/>
    </location>
</feature>
<feature type="compositionally biased region" description="Low complexity" evidence="5">
    <location>
        <begin position="382"/>
        <end position="426"/>
    </location>
</feature>
<feature type="compositionally biased region" description="Low complexity" evidence="5">
    <location>
        <begin position="557"/>
        <end position="588"/>
    </location>
</feature>
<feature type="active site" description="Proton acceptor" evidence="3 4">
    <location>
        <position position="158"/>
    </location>
</feature>
<feature type="binding site" evidence="3">
    <location>
        <begin position="32"/>
        <end position="40"/>
    </location>
    <ligand>
        <name>ATP</name>
        <dbReference type="ChEBI" id="CHEBI:30616"/>
    </ligand>
</feature>
<feature type="binding site" evidence="3">
    <location>
        <position position="60"/>
    </location>
    <ligand>
        <name>ATP</name>
        <dbReference type="ChEBI" id="CHEBI:30616"/>
    </ligand>
</feature>
<proteinExistence type="inferred from homology"/>